<protein>
    <recommendedName>
        <fullName>Dichloromethane dehalogenase</fullName>
        <shortName>DCM dehalogenase</shortName>
        <ecNumber>4.5.1.3</ecNumber>
    </recommendedName>
</protein>
<sequence>MSTKLRYLHHPASQPCRAVHQFMLENNIEFQEEIVDITTDINEQPEFRERYNPTGQVPILVDGDFTIWESAAIVYYLSEKYDCSSSWWGSTLEERGHIQQYMHWYAYTLRLGGGAFHWTIFAPMIYGYDKDFTVEVTKGRFLLYESFDILEKYWLKDGDYLCGNTLSYPDLATCQDLVSHDAGRIIPTSMWDSHPKVKAWFARMMDREHAKTVSAWQYENVRKYLDDGVKLNFQRKTAVLKGTEVYSGHNNGIIYNGDDDSFVTQHG</sequence>
<evidence type="ECO:0000269" key="1">
    <source>
    </source>
</evidence>
<evidence type="ECO:0000305" key="2"/>
<accession>P43387</accession>
<gene>
    <name type="primary">dcmA</name>
</gene>
<organism>
    <name type="scientific">Methylophilus leisingeri (strain DSM 6813 / VKM B-2013 / DM11)</name>
    <dbReference type="NCBI Taxonomy" id="45393"/>
    <lineage>
        <taxon>Bacteria</taxon>
        <taxon>Pseudomonadati</taxon>
        <taxon>Pseudomonadota</taxon>
        <taxon>Betaproteobacteria</taxon>
        <taxon>Nitrosomonadales</taxon>
        <taxon>Methylophilaceae</taxon>
        <taxon>Methylophilus</taxon>
    </lineage>
</organism>
<reference key="1">
    <citation type="journal article" date="1994" name="J. Bacteriol.">
        <title>Isolation and characterization of the Methylophilus sp. strain DM11 gene encoding dichloromethane dehalogenase/glutathione S-transferase.</title>
        <authorList>
            <person name="Bader R."/>
            <person name="Leisinger T."/>
        </authorList>
    </citation>
    <scope>NUCLEOTIDE SEQUENCE [GENOMIC DNA]</scope>
    <scope>PROTEIN SEQUENCE OF 2-31</scope>
</reference>
<reference key="2">
    <citation type="journal article" date="1988" name="J. Bacteriol.">
        <title>Dichloromethane dehalogenase with improved catalytic activity isolated from a fast-growing dichloromethane-utilizing bacterium.</title>
        <authorList>
            <person name="Scholtz R."/>
            <person name="Wackett L.P."/>
            <person name="Egli C."/>
            <person name="Cook A.M."/>
            <person name="Leisinger T."/>
        </authorList>
    </citation>
    <scope>PRELIMINARY PROTEIN SEQUENCE OF 2-23</scope>
</reference>
<feature type="initiator methionine" description="Removed" evidence="1">
    <location>
        <position position="1"/>
    </location>
</feature>
<feature type="chain" id="PRO_0000185989" description="Dichloromethane dehalogenase">
    <location>
        <begin position="2"/>
        <end position="267"/>
    </location>
</feature>
<feature type="domain" description="GST N-terminal">
    <location>
        <begin position="3"/>
        <end position="85"/>
    </location>
</feature>
<feature type="domain" description="GST C-terminal">
    <location>
        <begin position="91"/>
        <end position="224"/>
    </location>
</feature>
<keyword id="KW-0963">Cytoplasm</keyword>
<keyword id="KW-0903">Direct protein sequencing</keyword>
<keyword id="KW-0456">Lyase</keyword>
<dbReference type="EC" id="4.5.1.3"/>
<dbReference type="EMBL" id="L26544">
    <property type="protein sequence ID" value="AAA25443.1"/>
    <property type="molecule type" value="Genomic_DNA"/>
</dbReference>
<dbReference type="SMR" id="P43387"/>
<dbReference type="BRENDA" id="4.5.1.3">
    <property type="organism ID" value="3320"/>
</dbReference>
<dbReference type="SABIO-RK" id="P43387"/>
<dbReference type="UniPathway" id="UPA00688"/>
<dbReference type="GO" id="GO:0005737">
    <property type="term" value="C:cytoplasm"/>
    <property type="evidence" value="ECO:0007669"/>
    <property type="project" value="UniProtKB-SubCell"/>
</dbReference>
<dbReference type="GO" id="GO:0018834">
    <property type="term" value="F:dichloromethane dehalogenase activity"/>
    <property type="evidence" value="ECO:0007669"/>
    <property type="project" value="UniProtKB-EC"/>
</dbReference>
<dbReference type="GO" id="GO:0004364">
    <property type="term" value="F:glutathione transferase activity"/>
    <property type="evidence" value="ECO:0007669"/>
    <property type="project" value="TreeGrafter"/>
</dbReference>
<dbReference type="GO" id="GO:0006749">
    <property type="term" value="P:glutathione metabolic process"/>
    <property type="evidence" value="ECO:0007669"/>
    <property type="project" value="TreeGrafter"/>
</dbReference>
<dbReference type="CDD" id="cd03183">
    <property type="entry name" value="GST_C_Theta"/>
    <property type="match status" value="1"/>
</dbReference>
<dbReference type="CDD" id="cd03050">
    <property type="entry name" value="GST_N_Theta"/>
    <property type="match status" value="1"/>
</dbReference>
<dbReference type="Gene3D" id="1.20.1050.10">
    <property type="match status" value="1"/>
</dbReference>
<dbReference type="Gene3D" id="3.40.30.10">
    <property type="entry name" value="Glutaredoxin"/>
    <property type="match status" value="1"/>
</dbReference>
<dbReference type="InterPro" id="IPR010987">
    <property type="entry name" value="Glutathione-S-Trfase_C-like"/>
</dbReference>
<dbReference type="InterPro" id="IPR036282">
    <property type="entry name" value="Glutathione-S-Trfase_C_sf"/>
</dbReference>
<dbReference type="InterPro" id="IPR040079">
    <property type="entry name" value="Glutathione_S-Trfase"/>
</dbReference>
<dbReference type="InterPro" id="IPR004045">
    <property type="entry name" value="Glutathione_S-Trfase_N"/>
</dbReference>
<dbReference type="InterPro" id="IPR004046">
    <property type="entry name" value="GST_C"/>
</dbReference>
<dbReference type="InterPro" id="IPR040077">
    <property type="entry name" value="GST_C_Theta"/>
</dbReference>
<dbReference type="InterPro" id="IPR040075">
    <property type="entry name" value="GST_N_Theta"/>
</dbReference>
<dbReference type="InterPro" id="IPR051369">
    <property type="entry name" value="GST_Theta"/>
</dbReference>
<dbReference type="InterPro" id="IPR036249">
    <property type="entry name" value="Thioredoxin-like_sf"/>
</dbReference>
<dbReference type="PANTHER" id="PTHR43917">
    <property type="match status" value="1"/>
</dbReference>
<dbReference type="PANTHER" id="PTHR43917:SF8">
    <property type="entry name" value="GH16740P-RELATED"/>
    <property type="match status" value="1"/>
</dbReference>
<dbReference type="Pfam" id="PF00043">
    <property type="entry name" value="GST_C"/>
    <property type="match status" value="1"/>
</dbReference>
<dbReference type="Pfam" id="PF02798">
    <property type="entry name" value="GST_N"/>
    <property type="match status" value="1"/>
</dbReference>
<dbReference type="SFLD" id="SFLDS00019">
    <property type="entry name" value="Glutathione_Transferase_(cytos"/>
    <property type="match status" value="1"/>
</dbReference>
<dbReference type="SFLD" id="SFLDG00358">
    <property type="entry name" value="Main_(cytGST)"/>
    <property type="match status" value="1"/>
</dbReference>
<dbReference type="SUPFAM" id="SSF47616">
    <property type="entry name" value="GST C-terminal domain-like"/>
    <property type="match status" value="1"/>
</dbReference>
<dbReference type="SUPFAM" id="SSF52833">
    <property type="entry name" value="Thioredoxin-like"/>
    <property type="match status" value="1"/>
</dbReference>
<dbReference type="PROSITE" id="PS50405">
    <property type="entry name" value="GST_CTER"/>
    <property type="match status" value="1"/>
</dbReference>
<dbReference type="PROSITE" id="PS50404">
    <property type="entry name" value="GST_NTER"/>
    <property type="match status" value="1"/>
</dbReference>
<name>DCMA_METLD</name>
<proteinExistence type="evidence at protein level"/>
<comment type="catalytic activity">
    <reaction>
        <text>dichloromethane + H2O = formaldehyde + 2 chloride + 2 H(+)</text>
        <dbReference type="Rhea" id="RHEA:15397"/>
        <dbReference type="ChEBI" id="CHEBI:15377"/>
        <dbReference type="ChEBI" id="CHEBI:15378"/>
        <dbReference type="ChEBI" id="CHEBI:15767"/>
        <dbReference type="ChEBI" id="CHEBI:16842"/>
        <dbReference type="ChEBI" id="CHEBI:17996"/>
        <dbReference type="EC" id="4.5.1.3"/>
    </reaction>
</comment>
<comment type="pathway">
    <text>Xenobiotic degradation; dichloromethane degradation.</text>
</comment>
<comment type="subunit">
    <text>Homohexamer.</text>
</comment>
<comment type="subcellular location">
    <subcellularLocation>
        <location evidence="2">Cytoplasm</location>
    </subcellularLocation>
</comment>
<comment type="induction">
    <text>By dichloromethane.</text>
</comment>
<comment type="similarity">
    <text evidence="2">Belongs to the GST superfamily.</text>
</comment>